<name>CBRB_ECOK1</name>
<reference key="1">
    <citation type="journal article" date="2007" name="J. Bacteriol.">
        <title>The genome sequence of avian pathogenic Escherichia coli strain O1:K1:H7 shares strong similarities with human extraintestinal pathogenic E. coli genomes.</title>
        <authorList>
            <person name="Johnson T.J."/>
            <person name="Kariyawasam S."/>
            <person name="Wannemuehler Y."/>
            <person name="Mangiamele P."/>
            <person name="Johnson S.J."/>
            <person name="Doetkott C."/>
            <person name="Skyberg J.A."/>
            <person name="Lynne A.M."/>
            <person name="Johnson J.R."/>
            <person name="Nolan L.K."/>
        </authorList>
    </citation>
    <scope>NUCLEOTIDE SEQUENCE [LARGE SCALE GENOMIC DNA]</scope>
</reference>
<proteinExistence type="inferred from homology"/>
<dbReference type="EMBL" id="CP000468">
    <property type="protein sequence ID" value="ABJ03189.1"/>
    <property type="molecule type" value="Genomic_DNA"/>
</dbReference>
<dbReference type="RefSeq" id="WP_000116758.1">
    <property type="nucleotide sequence ID" value="NZ_CADILS010000011.1"/>
</dbReference>
<dbReference type="KEGG" id="ecv:APECO1_2744"/>
<dbReference type="HOGENOM" id="CLU_139024_0_0_6"/>
<dbReference type="Proteomes" id="UP000008216">
    <property type="component" value="Chromosome"/>
</dbReference>
<dbReference type="GO" id="GO:0005886">
    <property type="term" value="C:plasma membrane"/>
    <property type="evidence" value="ECO:0007669"/>
    <property type="project" value="UniProtKB-SubCell"/>
</dbReference>
<dbReference type="NCBIfam" id="NF007334">
    <property type="entry name" value="PRK09823.1"/>
    <property type="match status" value="1"/>
</dbReference>
<gene>
    <name type="primary">cbrB</name>
    <name type="ordered locus">Ecok1_36950</name>
    <name type="ORF">APECO1_2744</name>
</gene>
<feature type="chain" id="PRO_0000320700" description="Inner membrane protein CbrB">
    <location>
        <begin position="1"/>
        <end position="157"/>
    </location>
</feature>
<feature type="topological domain" description="Cytoplasmic" evidence="2">
    <location>
        <begin position="1"/>
        <end position="11"/>
    </location>
</feature>
<feature type="transmembrane region" description="Helical" evidence="2">
    <location>
        <begin position="12"/>
        <end position="32"/>
    </location>
</feature>
<feature type="topological domain" description="Periplasmic" evidence="2">
    <location>
        <begin position="33"/>
        <end position="36"/>
    </location>
</feature>
<feature type="transmembrane region" description="Helical" evidence="2">
    <location>
        <begin position="37"/>
        <end position="57"/>
    </location>
</feature>
<feature type="topological domain" description="Cytoplasmic" evidence="2">
    <location>
        <begin position="58"/>
        <end position="83"/>
    </location>
</feature>
<feature type="transmembrane region" description="Helical" evidence="2">
    <location>
        <begin position="84"/>
        <end position="104"/>
    </location>
</feature>
<feature type="topological domain" description="Periplasmic" evidence="2">
    <location>
        <begin position="105"/>
        <end position="125"/>
    </location>
</feature>
<feature type="transmembrane region" description="Helical" evidence="2">
    <location>
        <begin position="126"/>
        <end position="146"/>
    </location>
</feature>
<feature type="topological domain" description="Cytoplasmic" evidence="2">
    <location>
        <begin position="147"/>
        <end position="157"/>
    </location>
</feature>
<sequence length="157" mass="16914">MSVSRRVIHHGLYFAVLGPLIGVLFLVLYIFFAKEPLILLVIIQVLPLFLLMSITTGAIPAMLTGVMVACLPEKIGSQKRYRCLVGGIGGVVITEIYCAVIVHIKDMASSALFENILSGENLVVRIIPALLAGVVMSRIITHLPGLDISCPETDSLS</sequence>
<organism>
    <name type="scientific">Escherichia coli O1:K1 / APEC</name>
    <dbReference type="NCBI Taxonomy" id="405955"/>
    <lineage>
        <taxon>Bacteria</taxon>
        <taxon>Pseudomonadati</taxon>
        <taxon>Pseudomonadota</taxon>
        <taxon>Gammaproteobacteria</taxon>
        <taxon>Enterobacterales</taxon>
        <taxon>Enterobacteriaceae</taxon>
        <taxon>Escherichia</taxon>
    </lineage>
</organism>
<evidence type="ECO:0000250" key="1"/>
<evidence type="ECO:0000255" key="2"/>
<evidence type="ECO:0000305" key="3"/>
<keyword id="KW-0997">Cell inner membrane</keyword>
<keyword id="KW-1003">Cell membrane</keyword>
<keyword id="KW-0472">Membrane</keyword>
<keyword id="KW-1185">Reference proteome</keyword>
<keyword id="KW-0812">Transmembrane</keyword>
<keyword id="KW-1133">Transmembrane helix</keyword>
<accession>A1AHP9</accession>
<comment type="subcellular location">
    <subcellularLocation>
        <location evidence="1">Cell inner membrane</location>
        <topology evidence="1">Multi-pass membrane protein</topology>
    </subcellularLocation>
</comment>
<comment type="similarity">
    <text evidence="3">Belongs to the CbrB family.</text>
</comment>
<protein>
    <recommendedName>
        <fullName>Inner membrane protein CbrB</fullName>
    </recommendedName>
</protein>